<name>RS3_ANAAB</name>
<evidence type="ECO:0000255" key="1">
    <source>
        <dbReference type="HAMAP-Rule" id="MF_01309"/>
    </source>
</evidence>
<evidence type="ECO:0000256" key="2">
    <source>
        <dbReference type="SAM" id="MobiDB-lite"/>
    </source>
</evidence>
<evidence type="ECO:0000305" key="3"/>
<keyword id="KW-0687">Ribonucleoprotein</keyword>
<keyword id="KW-0689">Ribosomal protein</keyword>
<keyword id="KW-0694">RNA-binding</keyword>
<keyword id="KW-0699">rRNA-binding</keyword>
<comment type="function">
    <text evidence="1">Binds the lower part of the 30S subunit head. Binds mRNA in the 70S ribosome, positioning it for translation.</text>
</comment>
<comment type="subunit">
    <text evidence="1">Part of the 30S ribosomal subunit. Forms a tight complex with proteins S10 and S14.</text>
</comment>
<comment type="similarity">
    <text evidence="1">Belongs to the universal ribosomal protein uS3 family.</text>
</comment>
<accession>P41119</accession>
<organism>
    <name type="scientific">Anaeroplasma abactoclasticum</name>
    <dbReference type="NCBI Taxonomy" id="2087"/>
    <lineage>
        <taxon>Bacteria</taxon>
        <taxon>Bacillati</taxon>
        <taxon>Mycoplasmatota</taxon>
        <taxon>Mollicutes</taxon>
        <taxon>Anaeroplasmatales</taxon>
        <taxon>Anaeroplasmataceae</taxon>
        <taxon>Anaeroplasma</taxon>
    </lineage>
</organism>
<reference key="1">
    <citation type="journal article" date="1994" name="Int. J. Syst. Bacteriol.">
        <title>Phylogenetic relationships among members of the class Mollicutes deduced from rps3 gene sequences.</title>
        <authorList>
            <person name="Toth K.T."/>
            <person name="Harrison N."/>
            <person name="Sears B.B."/>
        </authorList>
    </citation>
    <scope>NUCLEOTIDE SEQUENCE [GENOMIC DNA]</scope>
    <source>
        <strain>JR</strain>
    </source>
</reference>
<proteinExistence type="inferred from homology"/>
<sequence>MGQKVSPMGLRVGINREWDAAWYAEKTQVANLLLEDLKIRKYINEVYAKAAISRVIIERVKGPNNKDRVKITLHTAKPGVVIGHEAETKNKVVKELGFITKKNIILNVVEVRRPELDATLVAKSIAEQLEARASFRRVQKVAIQRALKAGAKGAKTLISGRLGGAEIARSEGYNEGQVPLQTLRADVDYAVAEAHTTYGKLGIKVWIYKGEVFDVQPRAFQEEKKPAKKFNKKPVAAKPANKEEKSSKEVK</sequence>
<protein>
    <recommendedName>
        <fullName evidence="1">Small ribosomal subunit protein uS3</fullName>
    </recommendedName>
    <alternativeName>
        <fullName evidence="3">30S ribosomal protein S3</fullName>
    </alternativeName>
</protein>
<feature type="chain" id="PRO_0000130059" description="Small ribosomal subunit protein uS3">
    <location>
        <begin position="1"/>
        <end position="251"/>
    </location>
</feature>
<feature type="domain" description="KH type-2" evidence="1">
    <location>
        <begin position="39"/>
        <end position="112"/>
    </location>
</feature>
<feature type="region of interest" description="Disordered" evidence="2">
    <location>
        <begin position="222"/>
        <end position="251"/>
    </location>
</feature>
<feature type="compositionally biased region" description="Basic and acidic residues" evidence="2">
    <location>
        <begin position="240"/>
        <end position="251"/>
    </location>
</feature>
<gene>
    <name evidence="1" type="primary">rpsC</name>
    <name evidence="1" type="synonym">rps3</name>
</gene>
<dbReference type="EMBL" id="L22464">
    <property type="protein sequence ID" value="AAA22058.1"/>
    <property type="molecule type" value="Genomic_DNA"/>
</dbReference>
<dbReference type="PIR" id="I39638">
    <property type="entry name" value="I39638"/>
</dbReference>
<dbReference type="SMR" id="P41119"/>
<dbReference type="GO" id="GO:0022627">
    <property type="term" value="C:cytosolic small ribosomal subunit"/>
    <property type="evidence" value="ECO:0007669"/>
    <property type="project" value="TreeGrafter"/>
</dbReference>
<dbReference type="GO" id="GO:0003729">
    <property type="term" value="F:mRNA binding"/>
    <property type="evidence" value="ECO:0007669"/>
    <property type="project" value="UniProtKB-UniRule"/>
</dbReference>
<dbReference type="GO" id="GO:0019843">
    <property type="term" value="F:rRNA binding"/>
    <property type="evidence" value="ECO:0007669"/>
    <property type="project" value="UniProtKB-UniRule"/>
</dbReference>
<dbReference type="GO" id="GO:0003735">
    <property type="term" value="F:structural constituent of ribosome"/>
    <property type="evidence" value="ECO:0007669"/>
    <property type="project" value="InterPro"/>
</dbReference>
<dbReference type="GO" id="GO:0006412">
    <property type="term" value="P:translation"/>
    <property type="evidence" value="ECO:0007669"/>
    <property type="project" value="UniProtKB-UniRule"/>
</dbReference>
<dbReference type="CDD" id="cd02412">
    <property type="entry name" value="KH-II_30S_S3"/>
    <property type="match status" value="1"/>
</dbReference>
<dbReference type="FunFam" id="3.30.300.20:FF:000001">
    <property type="entry name" value="30S ribosomal protein S3"/>
    <property type="match status" value="1"/>
</dbReference>
<dbReference type="Gene3D" id="3.30.300.20">
    <property type="match status" value="1"/>
</dbReference>
<dbReference type="Gene3D" id="3.30.1140.32">
    <property type="entry name" value="Ribosomal protein S3, C-terminal domain"/>
    <property type="match status" value="1"/>
</dbReference>
<dbReference type="HAMAP" id="MF_01309_B">
    <property type="entry name" value="Ribosomal_uS3_B"/>
    <property type="match status" value="1"/>
</dbReference>
<dbReference type="InterPro" id="IPR004087">
    <property type="entry name" value="KH_dom"/>
</dbReference>
<dbReference type="InterPro" id="IPR015946">
    <property type="entry name" value="KH_dom-like_a/b"/>
</dbReference>
<dbReference type="InterPro" id="IPR004044">
    <property type="entry name" value="KH_dom_type_2"/>
</dbReference>
<dbReference type="InterPro" id="IPR009019">
    <property type="entry name" value="KH_sf_prok-type"/>
</dbReference>
<dbReference type="InterPro" id="IPR036419">
    <property type="entry name" value="Ribosomal_S3_C_sf"/>
</dbReference>
<dbReference type="InterPro" id="IPR005704">
    <property type="entry name" value="Ribosomal_uS3_bac-typ"/>
</dbReference>
<dbReference type="InterPro" id="IPR001351">
    <property type="entry name" value="Ribosomal_uS3_C"/>
</dbReference>
<dbReference type="InterPro" id="IPR018280">
    <property type="entry name" value="Ribosomal_uS3_CS"/>
</dbReference>
<dbReference type="NCBIfam" id="TIGR01009">
    <property type="entry name" value="rpsC_bact"/>
    <property type="match status" value="1"/>
</dbReference>
<dbReference type="PANTHER" id="PTHR11760">
    <property type="entry name" value="30S/40S RIBOSOMAL PROTEIN S3"/>
    <property type="match status" value="1"/>
</dbReference>
<dbReference type="PANTHER" id="PTHR11760:SF19">
    <property type="entry name" value="SMALL RIBOSOMAL SUBUNIT PROTEIN US3C"/>
    <property type="match status" value="1"/>
</dbReference>
<dbReference type="Pfam" id="PF07650">
    <property type="entry name" value="KH_2"/>
    <property type="match status" value="1"/>
</dbReference>
<dbReference type="Pfam" id="PF00189">
    <property type="entry name" value="Ribosomal_S3_C"/>
    <property type="match status" value="1"/>
</dbReference>
<dbReference type="SMART" id="SM00322">
    <property type="entry name" value="KH"/>
    <property type="match status" value="1"/>
</dbReference>
<dbReference type="SUPFAM" id="SSF54814">
    <property type="entry name" value="Prokaryotic type KH domain (KH-domain type II)"/>
    <property type="match status" value="1"/>
</dbReference>
<dbReference type="SUPFAM" id="SSF54821">
    <property type="entry name" value="Ribosomal protein S3 C-terminal domain"/>
    <property type="match status" value="1"/>
</dbReference>
<dbReference type="PROSITE" id="PS50823">
    <property type="entry name" value="KH_TYPE_2"/>
    <property type="match status" value="1"/>
</dbReference>
<dbReference type="PROSITE" id="PS00548">
    <property type="entry name" value="RIBOSOMAL_S3"/>
    <property type="match status" value="1"/>
</dbReference>